<name>LRP_KLEPN</name>
<reference key="1">
    <citation type="journal article" date="1995" name="J. Bacteriol.">
        <title>The amino acid sequence of Lrp is highly conserved in four enteric microorganisms.</title>
        <authorList>
            <person name="Friedberg D."/>
            <person name="Platko J.V."/>
            <person name="Tyler B."/>
            <person name="Calvo J.M."/>
        </authorList>
    </citation>
    <scope>NUCLEOTIDE SEQUENCE [GENOMIC DNA]</scope>
</reference>
<comment type="function">
    <text>Mediates a global response to leucine. Exogenous leucine affects the expression of a number of different operons; lrp mediates this effect for at least some of these operons. For example it is regulator of the branched-chain amino acid transport genes.</text>
</comment>
<comment type="subunit">
    <text>Homodimer.</text>
</comment>
<proteinExistence type="inferred from homology"/>
<sequence length="164" mass="18873">MVDSKKRPGKDLDRIDRNILNELQKDGRISNVELSKRVGLSPTPCLERVRRLERQGFIQGYTALLNPHYLDASLLVFVEITLNRGAPDVFEQFNSAVQKLEEIQECHLVSGDFDYLLKTRVPDMSAYRKLLGETLLRLPGVNDTRTYVVMEEVKQSNRLVIKTR</sequence>
<evidence type="ECO:0000250" key="1"/>
<evidence type="ECO:0000255" key="2">
    <source>
        <dbReference type="PROSITE-ProRule" id="PRU00319"/>
    </source>
</evidence>
<dbReference type="EMBL" id="U02274">
    <property type="protein sequence ID" value="AAA75465.1"/>
    <property type="molecule type" value="Genomic_DNA"/>
</dbReference>
<dbReference type="PIR" id="S59992">
    <property type="entry name" value="S59992"/>
</dbReference>
<dbReference type="SMR" id="P37424"/>
<dbReference type="GO" id="GO:0005829">
    <property type="term" value="C:cytosol"/>
    <property type="evidence" value="ECO:0007669"/>
    <property type="project" value="TreeGrafter"/>
</dbReference>
<dbReference type="GO" id="GO:0043565">
    <property type="term" value="F:sequence-specific DNA binding"/>
    <property type="evidence" value="ECO:0007669"/>
    <property type="project" value="InterPro"/>
</dbReference>
<dbReference type="GO" id="GO:0006524">
    <property type="term" value="P:alanine catabolic process"/>
    <property type="evidence" value="ECO:0007669"/>
    <property type="project" value="TreeGrafter"/>
</dbReference>
<dbReference type="GO" id="GO:0006355">
    <property type="term" value="P:regulation of DNA-templated transcription"/>
    <property type="evidence" value="ECO:0007669"/>
    <property type="project" value="UniProtKB-ARBA"/>
</dbReference>
<dbReference type="GO" id="GO:0043201">
    <property type="term" value="P:response to L-leucine"/>
    <property type="evidence" value="ECO:0007669"/>
    <property type="project" value="TreeGrafter"/>
</dbReference>
<dbReference type="CDD" id="cd00090">
    <property type="entry name" value="HTH_ARSR"/>
    <property type="match status" value="1"/>
</dbReference>
<dbReference type="FunFam" id="1.10.10.10:FF:000015">
    <property type="entry name" value="Leucine-responsive transcriptional regulator Lrp"/>
    <property type="match status" value="1"/>
</dbReference>
<dbReference type="FunFam" id="3.30.70.920:FF:000001">
    <property type="entry name" value="Transcriptional regulator, AsnC family"/>
    <property type="match status" value="1"/>
</dbReference>
<dbReference type="Gene3D" id="3.30.70.920">
    <property type="match status" value="1"/>
</dbReference>
<dbReference type="Gene3D" id="1.10.10.10">
    <property type="entry name" value="Winged helix-like DNA-binding domain superfamily/Winged helix DNA-binding domain"/>
    <property type="match status" value="1"/>
</dbReference>
<dbReference type="InterPro" id="IPR011991">
    <property type="entry name" value="ArsR-like_HTH"/>
</dbReference>
<dbReference type="InterPro" id="IPR000485">
    <property type="entry name" value="AsnC-type_HTH_dom"/>
</dbReference>
<dbReference type="InterPro" id="IPR011008">
    <property type="entry name" value="Dimeric_a/b-barrel"/>
</dbReference>
<dbReference type="InterPro" id="IPR019888">
    <property type="entry name" value="Tscrpt_reg_AsnC-like"/>
</dbReference>
<dbReference type="InterPro" id="IPR019887">
    <property type="entry name" value="Tscrpt_reg_AsnC/Lrp_C"/>
</dbReference>
<dbReference type="InterPro" id="IPR019885">
    <property type="entry name" value="Tscrpt_reg_HTH_AsnC-type_CS"/>
</dbReference>
<dbReference type="InterPro" id="IPR036388">
    <property type="entry name" value="WH-like_DNA-bd_sf"/>
</dbReference>
<dbReference type="InterPro" id="IPR036390">
    <property type="entry name" value="WH_DNA-bd_sf"/>
</dbReference>
<dbReference type="NCBIfam" id="NF008370">
    <property type="entry name" value="PRK11169.1"/>
    <property type="match status" value="1"/>
</dbReference>
<dbReference type="PANTHER" id="PTHR30154">
    <property type="entry name" value="LEUCINE-RESPONSIVE REGULATORY PROTEIN"/>
    <property type="match status" value="1"/>
</dbReference>
<dbReference type="PANTHER" id="PTHR30154:SF0">
    <property type="entry name" value="LEUCINE-RESPONSIVE REGULATORY PROTEIN"/>
    <property type="match status" value="1"/>
</dbReference>
<dbReference type="Pfam" id="PF01037">
    <property type="entry name" value="AsnC_trans_reg"/>
    <property type="match status" value="1"/>
</dbReference>
<dbReference type="Pfam" id="PF13412">
    <property type="entry name" value="HTH_24"/>
    <property type="match status" value="1"/>
</dbReference>
<dbReference type="PRINTS" id="PR00033">
    <property type="entry name" value="HTHASNC"/>
</dbReference>
<dbReference type="SMART" id="SM00344">
    <property type="entry name" value="HTH_ASNC"/>
    <property type="match status" value="1"/>
</dbReference>
<dbReference type="SUPFAM" id="SSF54909">
    <property type="entry name" value="Dimeric alpha+beta barrel"/>
    <property type="match status" value="1"/>
</dbReference>
<dbReference type="SUPFAM" id="SSF46785">
    <property type="entry name" value="Winged helix' DNA-binding domain"/>
    <property type="match status" value="1"/>
</dbReference>
<dbReference type="PROSITE" id="PS00519">
    <property type="entry name" value="HTH_ASNC_1"/>
    <property type="match status" value="1"/>
</dbReference>
<dbReference type="PROSITE" id="PS50956">
    <property type="entry name" value="HTH_ASNC_2"/>
    <property type="match status" value="1"/>
</dbReference>
<protein>
    <recommendedName>
        <fullName>Leucine-responsive regulatory protein</fullName>
    </recommendedName>
</protein>
<organism>
    <name type="scientific">Klebsiella pneumoniae</name>
    <dbReference type="NCBI Taxonomy" id="573"/>
    <lineage>
        <taxon>Bacteria</taxon>
        <taxon>Pseudomonadati</taxon>
        <taxon>Pseudomonadota</taxon>
        <taxon>Gammaproteobacteria</taxon>
        <taxon>Enterobacterales</taxon>
        <taxon>Enterobacteriaceae</taxon>
        <taxon>Klebsiella/Raoultella group</taxon>
        <taxon>Klebsiella</taxon>
        <taxon>Klebsiella pneumoniae complex</taxon>
    </lineage>
</organism>
<accession>P37424</accession>
<keyword id="KW-0010">Activator</keyword>
<keyword id="KW-0238">DNA-binding</keyword>
<keyword id="KW-0804">Transcription</keyword>
<keyword id="KW-0805">Transcription regulation</keyword>
<feature type="initiator methionine" description="Removed" evidence="1">
    <location>
        <position position="1"/>
    </location>
</feature>
<feature type="chain" id="PRO_0000111733" description="Leucine-responsive regulatory protein">
    <location>
        <begin position="2"/>
        <end position="164"/>
    </location>
</feature>
<feature type="domain" description="HTH asnC-type" evidence="2">
    <location>
        <begin position="12"/>
        <end position="73"/>
    </location>
</feature>
<feature type="DNA-binding region" description="H-T-H motif" evidence="2">
    <location>
        <begin position="31"/>
        <end position="50"/>
    </location>
</feature>
<gene>
    <name type="primary">lrp</name>
</gene>